<gene>
    <name type="primary">LOX1.4</name>
    <name type="synonym">SC514</name>
</gene>
<accession>P24095</accession>
<reference key="1">
    <citation type="journal article" date="1991" name="Plant Mol. Biol.">
        <title>Nucleotide sequences of a soybean lipoxygenase gene and the short intergenic region between an upstream lipoxygenase gene.</title>
        <authorList>
            <person name="Shibata D."/>
            <person name="Kato T."/>
            <person name="Tanaka K."/>
        </authorList>
    </citation>
    <scope>NUCLEOTIDE SEQUENCE [GENOMIC DNA]</scope>
    <source>
        <tissue>Cotyledon</tissue>
    </source>
</reference>
<reference key="2">
    <citation type="submission" date="1993-12" db="EMBL/GenBank/DDBJ databases">
        <authorList>
            <person name="Park T."/>
            <person name="Holland M.A."/>
            <person name="Laskey J.G."/>
            <person name="Polacco J.C."/>
        </authorList>
    </citation>
    <scope>NUCLEOTIDE SEQUENCE [MRNA]</scope>
    <source>
        <strain>cv. Williams 82</strain>
        <tissue>Radicle</tissue>
    </source>
</reference>
<reference key="3">
    <citation type="journal article" date="2006" name="Proteins">
        <title>Crystal structures of vegetative soybean lipoxygenase VLX-B and VLX-D, and comparisons with seed isoforms LOX-1 and LOX-3.</title>
        <authorList>
            <person name="Youn B."/>
            <person name="Sellhorn G.E."/>
            <person name="Mirchel R.J."/>
            <person name="Gaffney B.J."/>
            <person name="Grimes H.D."/>
            <person name="Kang C."/>
        </authorList>
    </citation>
    <scope>X-RAY CRYSTALLOGRAPHY (2.4 ANGSTROMS) IN COMPLEX WITH IRON IONS</scope>
</reference>
<name>LOXX_SOYBN</name>
<comment type="function">
    <text>Plant lipoxygenase may be involved in a number of diverse aspects of plant physiology including growth and development, pest resistance, and senescence or responses to wounding. It catalyzes the hydroperoxidation of lipids containing a cis,cis-1,4-pentadiene structure.</text>
</comment>
<comment type="catalytic activity">
    <reaction>
        <text>(9Z,12Z)-octadecadienoate + O2 = (9S)-hydroperoxy-(10E,12Z)-octadecadienoate</text>
        <dbReference type="Rhea" id="RHEA:30291"/>
        <dbReference type="ChEBI" id="CHEBI:15379"/>
        <dbReference type="ChEBI" id="CHEBI:30245"/>
        <dbReference type="ChEBI" id="CHEBI:60955"/>
        <dbReference type="EC" id="1.13.11.58"/>
    </reaction>
</comment>
<comment type="cofactor">
    <cofactor>
        <name>Fe cation</name>
        <dbReference type="ChEBI" id="CHEBI:24875"/>
    </cofactor>
    <text>Binds 1 Fe cation per subunit. Iron is tightly bound.</text>
</comment>
<comment type="pathway">
    <text evidence="2">Lipid metabolism; oxylipin biosynthesis.</text>
</comment>
<comment type="subunit">
    <text evidence="4">Monomer.</text>
</comment>
<comment type="subcellular location">
    <subcellularLocation>
        <location>Cytoplasm</location>
    </subcellularLocation>
</comment>
<comment type="tissue specificity">
    <text>Germinated cotyledons.</text>
</comment>
<comment type="induction">
    <text>By jasmonate.</text>
</comment>
<comment type="miscellaneous">
    <text>Soybean contains at least 4 distinct isoenzymes, L-1, L-2, L-3a and L-3b in dry seeds, and at least two distinct isozymes in the hypocotyl/radicle region of the seedling stem.</text>
</comment>
<comment type="similarity">
    <text evidence="5">Belongs to the lipoxygenase family.</text>
</comment>
<feature type="chain" id="PRO_0000220721" description="Seed linoleate 9S-lipoxygenase">
    <location>
        <begin position="1"/>
        <end position="864"/>
    </location>
</feature>
<feature type="domain" description="PLAT" evidence="1">
    <location>
        <begin position="44"/>
        <end position="171"/>
    </location>
</feature>
<feature type="domain" description="Lipoxygenase" evidence="2">
    <location>
        <begin position="174"/>
        <end position="864"/>
    </location>
</feature>
<feature type="region of interest" description="Disordered" evidence="3">
    <location>
        <begin position="244"/>
        <end position="264"/>
    </location>
</feature>
<feature type="binding site">
    <location>
        <position position="525"/>
    </location>
    <ligand>
        <name>Fe cation</name>
        <dbReference type="ChEBI" id="CHEBI:24875"/>
        <note>catalytic</note>
    </ligand>
</feature>
<feature type="binding site">
    <location>
        <position position="530"/>
    </location>
    <ligand>
        <name>Fe cation</name>
        <dbReference type="ChEBI" id="CHEBI:24875"/>
        <note>catalytic</note>
    </ligand>
</feature>
<feature type="binding site">
    <location>
        <position position="716"/>
    </location>
    <ligand>
        <name>Fe cation</name>
        <dbReference type="ChEBI" id="CHEBI:24875"/>
        <note>catalytic</note>
    </ligand>
</feature>
<feature type="binding site">
    <location>
        <position position="720"/>
    </location>
    <ligand>
        <name>Fe cation</name>
        <dbReference type="ChEBI" id="CHEBI:24875"/>
        <note>catalytic</note>
    </ligand>
</feature>
<feature type="binding site">
    <location>
        <position position="864"/>
    </location>
    <ligand>
        <name>Fe cation</name>
        <dbReference type="ChEBI" id="CHEBI:24875"/>
        <note>catalytic</note>
    </ligand>
</feature>
<feature type="sequence conflict" description="In Ref. 2; AAA03728." evidence="5" ref="2">
    <original>S</original>
    <variation>C</variation>
    <location>
        <position position="233"/>
    </location>
</feature>
<feature type="sequence conflict" description="In Ref. 2; AAA03728." evidence="5" ref="2">
    <original>R</original>
    <variation>L</variation>
    <location>
        <position position="240"/>
    </location>
</feature>
<feature type="sequence conflict" description="In Ref. 2; AAA03728." evidence="5" ref="2">
    <original>D</original>
    <variation>H</variation>
    <location>
        <position position="604"/>
    </location>
</feature>
<feature type="sequence conflict" description="In Ref. 2; AAA03728." evidence="5" ref="2">
    <original>M</original>
    <variation>K</variation>
    <location>
        <position position="695"/>
    </location>
</feature>
<feature type="strand" evidence="6">
    <location>
        <begin position="11"/>
        <end position="19"/>
    </location>
</feature>
<feature type="helix" evidence="6">
    <location>
        <begin position="20"/>
        <end position="22"/>
    </location>
</feature>
<feature type="helix" evidence="6">
    <location>
        <begin position="25"/>
        <end position="28"/>
    </location>
</feature>
<feature type="helix" evidence="6">
    <location>
        <begin position="58"/>
        <end position="60"/>
    </location>
</feature>
<feature type="strand" evidence="6">
    <location>
        <begin position="66"/>
        <end position="76"/>
    </location>
</feature>
<feature type="strand" evidence="6">
    <location>
        <begin position="78"/>
        <end position="80"/>
    </location>
</feature>
<feature type="strand" evidence="6">
    <location>
        <begin position="82"/>
        <end position="89"/>
    </location>
</feature>
<feature type="strand" evidence="6">
    <location>
        <begin position="92"/>
        <end position="94"/>
    </location>
</feature>
<feature type="strand" evidence="6">
    <location>
        <begin position="105"/>
        <end position="111"/>
    </location>
</feature>
<feature type="strand" evidence="6">
    <location>
        <begin position="120"/>
        <end position="127"/>
    </location>
</feature>
<feature type="strand" evidence="6">
    <location>
        <begin position="129"/>
        <end position="131"/>
    </location>
</feature>
<feature type="strand" evidence="6">
    <location>
        <begin position="133"/>
        <end position="141"/>
    </location>
</feature>
<feature type="strand" evidence="6">
    <location>
        <begin position="144"/>
        <end position="146"/>
    </location>
</feature>
<feature type="strand" evidence="6">
    <location>
        <begin position="149"/>
        <end position="157"/>
    </location>
</feature>
<feature type="helix" evidence="6">
    <location>
        <begin position="160"/>
        <end position="162"/>
    </location>
</feature>
<feature type="strand" evidence="6">
    <location>
        <begin position="163"/>
        <end position="165"/>
    </location>
</feature>
<feature type="strand" evidence="6">
    <location>
        <begin position="167"/>
        <end position="172"/>
    </location>
</feature>
<feature type="turn" evidence="6">
    <location>
        <begin position="177"/>
        <end position="179"/>
    </location>
</feature>
<feature type="helix" evidence="6">
    <location>
        <begin position="182"/>
        <end position="184"/>
    </location>
</feature>
<feature type="helix" evidence="6">
    <location>
        <begin position="185"/>
        <end position="196"/>
    </location>
</feature>
<feature type="helix" evidence="6">
    <location>
        <begin position="221"/>
        <end position="223"/>
    </location>
</feature>
<feature type="strand" evidence="6">
    <location>
        <begin position="230"/>
        <end position="236"/>
    </location>
</feature>
<feature type="helix" evidence="6">
    <location>
        <begin position="265"/>
        <end position="267"/>
    </location>
</feature>
<feature type="helix" evidence="6">
    <location>
        <begin position="274"/>
        <end position="276"/>
    </location>
</feature>
<feature type="helix" evidence="6">
    <location>
        <begin position="278"/>
        <end position="287"/>
    </location>
</feature>
<feature type="helix" evidence="6">
    <location>
        <begin position="290"/>
        <end position="298"/>
    </location>
</feature>
<feature type="helix" evidence="6">
    <location>
        <begin position="310"/>
        <end position="314"/>
    </location>
</feature>
<feature type="turn" evidence="6">
    <location>
        <begin position="315"/>
        <end position="317"/>
    </location>
</feature>
<feature type="helix" evidence="6">
    <location>
        <begin position="325"/>
        <end position="331"/>
    </location>
</feature>
<feature type="turn" evidence="6">
    <location>
        <begin position="335"/>
        <end position="340"/>
    </location>
</feature>
<feature type="strand" evidence="6">
    <location>
        <begin position="346"/>
        <end position="350"/>
    </location>
</feature>
<feature type="strand" evidence="6">
    <location>
        <begin position="360"/>
        <end position="365"/>
    </location>
</feature>
<feature type="helix" evidence="6">
    <location>
        <begin position="367"/>
        <end position="376"/>
    </location>
</feature>
<feature type="strand" evidence="6">
    <location>
        <begin position="377"/>
        <end position="379"/>
    </location>
</feature>
<feature type="strand" evidence="6">
    <location>
        <begin position="387"/>
        <end position="390"/>
    </location>
</feature>
<feature type="helix" evidence="6">
    <location>
        <begin position="397"/>
        <end position="400"/>
    </location>
</feature>
<feature type="helix" evidence="6">
    <location>
        <begin position="409"/>
        <end position="412"/>
    </location>
</feature>
<feature type="helix" evidence="6">
    <location>
        <begin position="413"/>
        <end position="415"/>
    </location>
</feature>
<feature type="turn" evidence="6">
    <location>
        <begin position="416"/>
        <end position="418"/>
    </location>
</feature>
<feature type="helix" evidence="6">
    <location>
        <begin position="421"/>
        <end position="426"/>
    </location>
</feature>
<feature type="strand" evidence="6">
    <location>
        <begin position="430"/>
        <end position="434"/>
    </location>
</feature>
<feature type="helix" evidence="6">
    <location>
        <begin position="436"/>
        <end position="439"/>
    </location>
</feature>
<feature type="helix" evidence="6">
    <location>
        <begin position="440"/>
        <end position="442"/>
    </location>
</feature>
<feature type="helix" evidence="6">
    <location>
        <begin position="443"/>
        <end position="447"/>
    </location>
</feature>
<feature type="strand" evidence="6">
    <location>
        <begin position="456"/>
        <end position="463"/>
    </location>
</feature>
<feature type="strand" evidence="6">
    <location>
        <begin position="469"/>
        <end position="478"/>
    </location>
</feature>
<feature type="strand" evidence="6">
    <location>
        <begin position="481"/>
        <end position="486"/>
    </location>
</feature>
<feature type="strand" evidence="6">
    <location>
        <begin position="489"/>
        <end position="493"/>
    </location>
</feature>
<feature type="strand" evidence="6">
    <location>
        <begin position="497"/>
        <end position="500"/>
    </location>
</feature>
<feature type="helix" evidence="6">
    <location>
        <begin position="501"/>
        <end position="522"/>
    </location>
</feature>
<feature type="helix" evidence="6">
    <location>
        <begin position="523"/>
        <end position="529"/>
    </location>
</feature>
<feature type="helix" evidence="6">
    <location>
        <begin position="530"/>
        <end position="543"/>
    </location>
</feature>
<feature type="helix" evidence="6">
    <location>
        <begin position="549"/>
        <end position="554"/>
    </location>
</feature>
<feature type="helix" evidence="6">
    <location>
        <begin position="555"/>
        <end position="558"/>
    </location>
</feature>
<feature type="helix" evidence="6">
    <location>
        <begin position="561"/>
        <end position="571"/>
    </location>
</feature>
<feature type="helix" evidence="6">
    <location>
        <begin position="578"/>
        <end position="582"/>
    </location>
</feature>
<feature type="helix" evidence="6">
    <location>
        <begin position="586"/>
        <end position="588"/>
    </location>
</feature>
<feature type="helix" evidence="6">
    <location>
        <begin position="589"/>
        <end position="597"/>
    </location>
</feature>
<feature type="helix" evidence="6">
    <location>
        <begin position="602"/>
        <end position="604"/>
    </location>
</feature>
<feature type="helix" evidence="6">
    <location>
        <begin position="607"/>
        <end position="613"/>
    </location>
</feature>
<feature type="strand" evidence="6">
    <location>
        <begin position="616"/>
        <end position="619"/>
    </location>
</feature>
<feature type="strand" evidence="6">
    <location>
        <begin position="621"/>
        <end position="623"/>
    </location>
</feature>
<feature type="strand" evidence="6">
    <location>
        <begin position="626"/>
        <end position="632"/>
    </location>
</feature>
<feature type="helix" evidence="6">
    <location>
        <begin position="635"/>
        <end position="658"/>
    </location>
</feature>
<feature type="helix" evidence="6">
    <location>
        <begin position="662"/>
        <end position="667"/>
    </location>
</feature>
<feature type="helix" evidence="6">
    <location>
        <begin position="669"/>
        <end position="680"/>
    </location>
</feature>
<feature type="turn" evidence="6">
    <location>
        <begin position="681"/>
        <end position="683"/>
    </location>
</feature>
<feature type="helix" evidence="6">
    <location>
        <begin position="684"/>
        <end position="686"/>
    </location>
</feature>
<feature type="strand" evidence="6">
    <location>
        <begin position="695"/>
        <end position="697"/>
    </location>
</feature>
<feature type="helix" evidence="6">
    <location>
        <begin position="698"/>
        <end position="712"/>
    </location>
</feature>
<feature type="helix" evidence="6">
    <location>
        <begin position="714"/>
        <end position="720"/>
    </location>
</feature>
<feature type="helix" evidence="6">
    <location>
        <begin position="723"/>
        <end position="727"/>
    </location>
</feature>
<feature type="turn" evidence="6">
    <location>
        <begin position="730"/>
        <end position="732"/>
    </location>
</feature>
<feature type="helix" evidence="6">
    <location>
        <begin position="747"/>
        <end position="754"/>
    </location>
</feature>
<feature type="helix" evidence="6">
    <location>
        <begin position="756"/>
        <end position="761"/>
    </location>
</feature>
<feature type="helix" evidence="6">
    <location>
        <begin position="767"/>
        <end position="780"/>
    </location>
</feature>
<feature type="helix" evidence="6">
    <location>
        <begin position="802"/>
        <end position="825"/>
    </location>
</feature>
<feature type="helix" evidence="6">
    <location>
        <begin position="832"/>
        <end position="834"/>
    </location>
</feature>
<feature type="helix" evidence="6">
    <location>
        <begin position="836"/>
        <end position="838"/>
    </location>
</feature>
<feature type="strand" evidence="6">
    <location>
        <begin position="851"/>
        <end position="853"/>
    </location>
</feature>
<feature type="strand" evidence="6">
    <location>
        <begin position="859"/>
        <end position="861"/>
    </location>
</feature>
<dbReference type="EC" id="1.13.11.58"/>
<dbReference type="EMBL" id="X56139">
    <property type="protein sequence ID" value="CAA39604.1"/>
    <property type="molecule type" value="Genomic_DNA"/>
</dbReference>
<dbReference type="EMBL" id="U04526">
    <property type="protein sequence ID" value="AAA03728.1"/>
    <property type="molecule type" value="mRNA"/>
</dbReference>
<dbReference type="PIR" id="S13381">
    <property type="entry name" value="S13381"/>
</dbReference>
<dbReference type="RefSeq" id="NP_001238676.1">
    <property type="nucleotide sequence ID" value="NM_001251747.1"/>
</dbReference>
<dbReference type="PDB" id="2IUK">
    <property type="method" value="X-ray"/>
    <property type="resolution" value="2.40 A"/>
    <property type="chains" value="A/B=1-864"/>
</dbReference>
<dbReference type="PDBsum" id="2IUK"/>
<dbReference type="SMR" id="P24095"/>
<dbReference type="STRING" id="3847.P24095"/>
<dbReference type="BindingDB" id="P24095"/>
<dbReference type="ChEMBL" id="CHEMBL3120043"/>
<dbReference type="PaxDb" id="3847-GLYMA07G00900.1"/>
<dbReference type="ProMEX" id="P24095"/>
<dbReference type="EnsemblPlants" id="KRH47067">
    <property type="protein sequence ID" value="KRH47067"/>
    <property type="gene ID" value="GLYMA_07G007000"/>
</dbReference>
<dbReference type="GeneID" id="547835"/>
<dbReference type="Gramene" id="KRH47067">
    <property type="protein sequence ID" value="KRH47067"/>
    <property type="gene ID" value="GLYMA_07G007000"/>
</dbReference>
<dbReference type="KEGG" id="gmx:547835"/>
<dbReference type="eggNOG" id="ENOG502QQSP">
    <property type="taxonomic scope" value="Eukaryota"/>
</dbReference>
<dbReference type="InParanoid" id="P24095"/>
<dbReference type="OMA" id="YIRNYMQ"/>
<dbReference type="OrthoDB" id="407298at2759"/>
<dbReference type="UniPathway" id="UPA00382"/>
<dbReference type="EvolutionaryTrace" id="P24095"/>
<dbReference type="PRO" id="PR:P24095"/>
<dbReference type="Proteomes" id="UP000008827">
    <property type="component" value="Chromosome 7"/>
</dbReference>
<dbReference type="GO" id="GO:0005737">
    <property type="term" value="C:cytoplasm"/>
    <property type="evidence" value="ECO:0007669"/>
    <property type="project" value="UniProtKB-SubCell"/>
</dbReference>
<dbReference type="GO" id="GO:0005506">
    <property type="term" value="F:iron ion binding"/>
    <property type="evidence" value="ECO:0000314"/>
    <property type="project" value="UniProtKB"/>
</dbReference>
<dbReference type="GO" id="GO:1990136">
    <property type="term" value="F:linoleate 9S-lipoxygenase activity"/>
    <property type="evidence" value="ECO:0007669"/>
    <property type="project" value="UniProtKB-EC"/>
</dbReference>
<dbReference type="GO" id="GO:0016702">
    <property type="term" value="F:oxidoreductase activity, acting on single donors with incorporation of molecular oxygen, incorporation of two atoms of oxygen"/>
    <property type="evidence" value="ECO:0000318"/>
    <property type="project" value="GO_Central"/>
</dbReference>
<dbReference type="GO" id="GO:0006633">
    <property type="term" value="P:fatty acid biosynthetic process"/>
    <property type="evidence" value="ECO:0007669"/>
    <property type="project" value="UniProtKB-KW"/>
</dbReference>
<dbReference type="GO" id="GO:0034440">
    <property type="term" value="P:lipid oxidation"/>
    <property type="evidence" value="ECO:0000318"/>
    <property type="project" value="GO_Central"/>
</dbReference>
<dbReference type="GO" id="GO:0031408">
    <property type="term" value="P:oxylipin biosynthetic process"/>
    <property type="evidence" value="ECO:0007669"/>
    <property type="project" value="UniProtKB-UniPathway"/>
</dbReference>
<dbReference type="CDD" id="cd01751">
    <property type="entry name" value="PLAT_LH2"/>
    <property type="match status" value="1"/>
</dbReference>
<dbReference type="FunFam" id="1.20.245.10:FF:000002">
    <property type="entry name" value="Lipoxygenase"/>
    <property type="match status" value="1"/>
</dbReference>
<dbReference type="FunFam" id="3.10.450.60:FF:000002">
    <property type="entry name" value="Lipoxygenase"/>
    <property type="match status" value="1"/>
</dbReference>
<dbReference type="Gene3D" id="3.10.450.60">
    <property type="match status" value="1"/>
</dbReference>
<dbReference type="Gene3D" id="4.10.375.10">
    <property type="entry name" value="Lipoxygenase-1, Domain 2"/>
    <property type="match status" value="1"/>
</dbReference>
<dbReference type="Gene3D" id="4.10.372.10">
    <property type="entry name" value="Lipoxygenase-1, Domain 3"/>
    <property type="match status" value="1"/>
</dbReference>
<dbReference type="Gene3D" id="1.20.245.10">
    <property type="entry name" value="Lipoxygenase-1, Domain 5"/>
    <property type="match status" value="1"/>
</dbReference>
<dbReference type="Gene3D" id="2.60.60.20">
    <property type="entry name" value="PLAT/LH2 domain"/>
    <property type="match status" value="1"/>
</dbReference>
<dbReference type="InterPro" id="IPR000907">
    <property type="entry name" value="LipOase"/>
</dbReference>
<dbReference type="InterPro" id="IPR013819">
    <property type="entry name" value="LipOase_C"/>
</dbReference>
<dbReference type="InterPro" id="IPR036226">
    <property type="entry name" value="LipOase_C_sf"/>
</dbReference>
<dbReference type="InterPro" id="IPR020834">
    <property type="entry name" value="LipOase_CS"/>
</dbReference>
<dbReference type="InterPro" id="IPR020833">
    <property type="entry name" value="LipOase_Fe_BS"/>
</dbReference>
<dbReference type="InterPro" id="IPR001246">
    <property type="entry name" value="LipOase_plant"/>
</dbReference>
<dbReference type="InterPro" id="IPR042057">
    <property type="entry name" value="Lipoxy_PLAT/LH2"/>
</dbReference>
<dbReference type="InterPro" id="IPR027433">
    <property type="entry name" value="Lipoxygenase_dom_3"/>
</dbReference>
<dbReference type="InterPro" id="IPR001024">
    <property type="entry name" value="PLAT/LH2_dom"/>
</dbReference>
<dbReference type="InterPro" id="IPR036392">
    <property type="entry name" value="PLAT/LH2_dom_sf"/>
</dbReference>
<dbReference type="PANTHER" id="PTHR11771">
    <property type="entry name" value="LIPOXYGENASE"/>
    <property type="match status" value="1"/>
</dbReference>
<dbReference type="Pfam" id="PF00305">
    <property type="entry name" value="Lipoxygenase"/>
    <property type="match status" value="1"/>
</dbReference>
<dbReference type="Pfam" id="PF01477">
    <property type="entry name" value="PLAT"/>
    <property type="match status" value="1"/>
</dbReference>
<dbReference type="PRINTS" id="PR00087">
    <property type="entry name" value="LIPOXYGENASE"/>
</dbReference>
<dbReference type="PRINTS" id="PR00468">
    <property type="entry name" value="PLTLPOXGNASE"/>
</dbReference>
<dbReference type="SMART" id="SM00308">
    <property type="entry name" value="LH2"/>
    <property type="match status" value="1"/>
</dbReference>
<dbReference type="SUPFAM" id="SSF49723">
    <property type="entry name" value="Lipase/lipooxygenase domain (PLAT/LH2 domain)"/>
    <property type="match status" value="1"/>
</dbReference>
<dbReference type="SUPFAM" id="SSF48484">
    <property type="entry name" value="Lipoxigenase"/>
    <property type="match status" value="1"/>
</dbReference>
<dbReference type="PROSITE" id="PS00711">
    <property type="entry name" value="LIPOXYGENASE_1"/>
    <property type="match status" value="1"/>
</dbReference>
<dbReference type="PROSITE" id="PS00081">
    <property type="entry name" value="LIPOXYGENASE_2"/>
    <property type="match status" value="1"/>
</dbReference>
<dbReference type="PROSITE" id="PS51393">
    <property type="entry name" value="LIPOXYGENASE_3"/>
    <property type="match status" value="1"/>
</dbReference>
<dbReference type="PROSITE" id="PS50095">
    <property type="entry name" value="PLAT"/>
    <property type="match status" value="1"/>
</dbReference>
<keyword id="KW-0002">3D-structure</keyword>
<keyword id="KW-0963">Cytoplasm</keyword>
<keyword id="KW-0223">Dioxygenase</keyword>
<keyword id="KW-0275">Fatty acid biosynthesis</keyword>
<keyword id="KW-0276">Fatty acid metabolism</keyword>
<keyword id="KW-0408">Iron</keyword>
<keyword id="KW-0444">Lipid biosynthesis</keyword>
<keyword id="KW-0443">Lipid metabolism</keyword>
<keyword id="KW-0479">Metal-binding</keyword>
<keyword id="KW-0560">Oxidoreductase</keyword>
<keyword id="KW-0925">Oxylipin biosynthesis</keyword>
<keyword id="KW-1185">Reference proteome</keyword>
<proteinExistence type="evidence at protein level"/>
<sequence>MFGIFDKGQKIKGTVVLMPKNVLDFNAITSIGKGGVIDTATGILGQGVSLVGGVIDTATSFLGRNISMQLISATQTDGSGNGKVGKEVYLEKHLPTLPTLGARQDAFSIFFEWDASFGIPGAFYIKNFMTDEFFLVSVKLEDIPNHGTIEFVCNSWVYNFRSYKKNRIFFVNDTYLPSATPAPLLKYRKEELEVLRGDGTGKRKDFDRIYDYDVYNDLGNPDGGDPRPILGGSSIYPYPRRVRTGRERTRTDPNSEKPGEVYVPRDENFGHLKSSDFLTYGIKSLSHDVIPLFKSAIFQLRVTSSEFESFEDVRSLYEGGIKLPTDILSQISPLPALKEIFRTDGENVLQFPPPHVAKVSKSGWMTDEEFAREVIAGVNPNVIRRLQEFPPKSTLDPTLYGDQTSTITKEQLEINMGGVTVEEALSTQRLFILDYQDAFIPYLTRINSLPTAKAYATRTILFLKDDGTLKPLAIELSKPHPDGDNLGPESIVVLPATEGVDSTIWLLAKAHVIVNDSGYHQLVSHWLNTHAVMEPFAIATNRHLSVLHPIYKLLYPHYRDTININGLARQSLINADGIIEKSFLPGKYSIEMSSSVYKNWVFTDQALPADLVKRGLAIEDPSAPHGLRLVIEDYPYAVDGLEIWDAIKTWVHEYVSLYYPTDAAVQQDTELQAWWKEAVEKGHGDLKEKPWWPKMQTTEDLIQSCSIIVWTASALHAAVNFGQYPYGGLILNRPTLARRFIPAEGTPEYDEMVKNPQKAYLRTITPKFETLIDLSVIEILSRHASDEIYLGERETPNWTTDKKALEAFKRFGSKLTGIEGKINARNSDPSLRNRTGPVQLPYTLLHRSSEEGLTFKGIPNSISI</sequence>
<organism>
    <name type="scientific">Glycine max</name>
    <name type="common">Soybean</name>
    <name type="synonym">Glycine hispida</name>
    <dbReference type="NCBI Taxonomy" id="3847"/>
    <lineage>
        <taxon>Eukaryota</taxon>
        <taxon>Viridiplantae</taxon>
        <taxon>Streptophyta</taxon>
        <taxon>Embryophyta</taxon>
        <taxon>Tracheophyta</taxon>
        <taxon>Spermatophyta</taxon>
        <taxon>Magnoliopsida</taxon>
        <taxon>eudicotyledons</taxon>
        <taxon>Gunneridae</taxon>
        <taxon>Pentapetalae</taxon>
        <taxon>rosids</taxon>
        <taxon>fabids</taxon>
        <taxon>Fabales</taxon>
        <taxon>Fabaceae</taxon>
        <taxon>Papilionoideae</taxon>
        <taxon>50 kb inversion clade</taxon>
        <taxon>NPAAA clade</taxon>
        <taxon>indigoferoid/millettioid clade</taxon>
        <taxon>Phaseoleae</taxon>
        <taxon>Glycine</taxon>
        <taxon>Glycine subgen. Soja</taxon>
    </lineage>
</organism>
<protein>
    <recommendedName>
        <fullName>Seed linoleate 9S-lipoxygenase</fullName>
        <ecNumber>1.13.11.58</ecNumber>
    </recommendedName>
    <alternativeName>
        <fullName>Lipoxygenase</fullName>
    </alternativeName>
</protein>
<evidence type="ECO:0000255" key="1">
    <source>
        <dbReference type="PROSITE-ProRule" id="PRU00152"/>
    </source>
</evidence>
<evidence type="ECO:0000255" key="2">
    <source>
        <dbReference type="PROSITE-ProRule" id="PRU00726"/>
    </source>
</evidence>
<evidence type="ECO:0000256" key="3">
    <source>
        <dbReference type="SAM" id="MobiDB-lite"/>
    </source>
</evidence>
<evidence type="ECO:0000269" key="4">
    <source>
    </source>
</evidence>
<evidence type="ECO:0000305" key="5"/>
<evidence type="ECO:0007829" key="6">
    <source>
        <dbReference type="PDB" id="2IUK"/>
    </source>
</evidence>